<reference key="1">
    <citation type="journal article" date="2004" name="Proc. Natl. Acad. Sci. U.S.A.">
        <title>Complete genomes of two clinical Staphylococcus aureus strains: evidence for the rapid evolution of virulence and drug resistance.</title>
        <authorList>
            <person name="Holden M.T.G."/>
            <person name="Feil E.J."/>
            <person name="Lindsay J.A."/>
            <person name="Peacock S.J."/>
            <person name="Day N.P.J."/>
            <person name="Enright M.C."/>
            <person name="Foster T.J."/>
            <person name="Moore C.E."/>
            <person name="Hurst L."/>
            <person name="Atkin R."/>
            <person name="Barron A."/>
            <person name="Bason N."/>
            <person name="Bentley S.D."/>
            <person name="Chillingworth C."/>
            <person name="Chillingworth T."/>
            <person name="Churcher C."/>
            <person name="Clark L."/>
            <person name="Corton C."/>
            <person name="Cronin A."/>
            <person name="Doggett J."/>
            <person name="Dowd L."/>
            <person name="Feltwell T."/>
            <person name="Hance Z."/>
            <person name="Harris B."/>
            <person name="Hauser H."/>
            <person name="Holroyd S."/>
            <person name="Jagels K."/>
            <person name="James K.D."/>
            <person name="Lennard N."/>
            <person name="Line A."/>
            <person name="Mayes R."/>
            <person name="Moule S."/>
            <person name="Mungall K."/>
            <person name="Ormond D."/>
            <person name="Quail M.A."/>
            <person name="Rabbinowitsch E."/>
            <person name="Rutherford K.M."/>
            <person name="Sanders M."/>
            <person name="Sharp S."/>
            <person name="Simmonds M."/>
            <person name="Stevens K."/>
            <person name="Whitehead S."/>
            <person name="Barrell B.G."/>
            <person name="Spratt B.G."/>
            <person name="Parkhill J."/>
        </authorList>
    </citation>
    <scope>NUCLEOTIDE SEQUENCE [LARGE SCALE GENOMIC DNA]</scope>
    <source>
        <strain>MSSA476</strain>
    </source>
</reference>
<comment type="function">
    <text evidence="1">Binds to 23S rRNA. Forms part of two intersubunit bridges in the 70S ribosome.</text>
</comment>
<comment type="subunit">
    <text evidence="1">Part of the 50S ribosomal subunit. Forms a cluster with proteins L3 and L19. In the 70S ribosome, L14 and L19 interact and together make contacts with the 16S rRNA in bridges B5 and B8.</text>
</comment>
<comment type="similarity">
    <text evidence="1">Belongs to the universal ribosomal protein uL14 family.</text>
</comment>
<protein>
    <recommendedName>
        <fullName evidence="1">Large ribosomal subunit protein uL14</fullName>
    </recommendedName>
    <alternativeName>
        <fullName evidence="2">50S ribosomal protein L14</fullName>
    </alternativeName>
</protein>
<feature type="chain" id="PRO_0000224016" description="Large ribosomal subunit protein uL14">
    <location>
        <begin position="1"/>
        <end position="122"/>
    </location>
</feature>
<evidence type="ECO:0000255" key="1">
    <source>
        <dbReference type="HAMAP-Rule" id="MF_01367"/>
    </source>
</evidence>
<evidence type="ECO:0000305" key="2"/>
<name>RL14_STAAS</name>
<dbReference type="EMBL" id="BX571857">
    <property type="protein sequence ID" value="CAG43942.1"/>
    <property type="molecule type" value="Genomic_DNA"/>
</dbReference>
<dbReference type="RefSeq" id="WP_000615921.1">
    <property type="nucleotide sequence ID" value="NC_002953.3"/>
</dbReference>
<dbReference type="SMR" id="Q6G781"/>
<dbReference type="GeneID" id="98346552"/>
<dbReference type="KEGG" id="sas:SAS2131"/>
<dbReference type="HOGENOM" id="CLU_095071_2_1_9"/>
<dbReference type="GO" id="GO:0022625">
    <property type="term" value="C:cytosolic large ribosomal subunit"/>
    <property type="evidence" value="ECO:0007669"/>
    <property type="project" value="TreeGrafter"/>
</dbReference>
<dbReference type="GO" id="GO:0070180">
    <property type="term" value="F:large ribosomal subunit rRNA binding"/>
    <property type="evidence" value="ECO:0007669"/>
    <property type="project" value="TreeGrafter"/>
</dbReference>
<dbReference type="GO" id="GO:0003735">
    <property type="term" value="F:structural constituent of ribosome"/>
    <property type="evidence" value="ECO:0007669"/>
    <property type="project" value="InterPro"/>
</dbReference>
<dbReference type="GO" id="GO:0006412">
    <property type="term" value="P:translation"/>
    <property type="evidence" value="ECO:0007669"/>
    <property type="project" value="UniProtKB-UniRule"/>
</dbReference>
<dbReference type="CDD" id="cd00337">
    <property type="entry name" value="Ribosomal_uL14"/>
    <property type="match status" value="1"/>
</dbReference>
<dbReference type="FunFam" id="2.40.150.20:FF:000001">
    <property type="entry name" value="50S ribosomal protein L14"/>
    <property type="match status" value="1"/>
</dbReference>
<dbReference type="Gene3D" id="2.40.150.20">
    <property type="entry name" value="Ribosomal protein L14"/>
    <property type="match status" value="1"/>
</dbReference>
<dbReference type="HAMAP" id="MF_01367">
    <property type="entry name" value="Ribosomal_uL14"/>
    <property type="match status" value="1"/>
</dbReference>
<dbReference type="InterPro" id="IPR000218">
    <property type="entry name" value="Ribosomal_uL14"/>
</dbReference>
<dbReference type="InterPro" id="IPR005745">
    <property type="entry name" value="Ribosomal_uL14_bac-type"/>
</dbReference>
<dbReference type="InterPro" id="IPR019972">
    <property type="entry name" value="Ribosomal_uL14_CS"/>
</dbReference>
<dbReference type="InterPro" id="IPR036853">
    <property type="entry name" value="Ribosomal_uL14_sf"/>
</dbReference>
<dbReference type="NCBIfam" id="TIGR01067">
    <property type="entry name" value="rplN_bact"/>
    <property type="match status" value="1"/>
</dbReference>
<dbReference type="PANTHER" id="PTHR11761">
    <property type="entry name" value="50S/60S RIBOSOMAL PROTEIN L14/L23"/>
    <property type="match status" value="1"/>
</dbReference>
<dbReference type="PANTHER" id="PTHR11761:SF3">
    <property type="entry name" value="LARGE RIBOSOMAL SUBUNIT PROTEIN UL14M"/>
    <property type="match status" value="1"/>
</dbReference>
<dbReference type="Pfam" id="PF00238">
    <property type="entry name" value="Ribosomal_L14"/>
    <property type="match status" value="1"/>
</dbReference>
<dbReference type="SMART" id="SM01374">
    <property type="entry name" value="Ribosomal_L14"/>
    <property type="match status" value="1"/>
</dbReference>
<dbReference type="SUPFAM" id="SSF50193">
    <property type="entry name" value="Ribosomal protein L14"/>
    <property type="match status" value="1"/>
</dbReference>
<dbReference type="PROSITE" id="PS00049">
    <property type="entry name" value="RIBOSOMAL_L14"/>
    <property type="match status" value="1"/>
</dbReference>
<organism>
    <name type="scientific">Staphylococcus aureus (strain MSSA476)</name>
    <dbReference type="NCBI Taxonomy" id="282459"/>
    <lineage>
        <taxon>Bacteria</taxon>
        <taxon>Bacillati</taxon>
        <taxon>Bacillota</taxon>
        <taxon>Bacilli</taxon>
        <taxon>Bacillales</taxon>
        <taxon>Staphylococcaceae</taxon>
        <taxon>Staphylococcus</taxon>
    </lineage>
</organism>
<accession>Q6G781</accession>
<proteinExistence type="inferred from homology"/>
<keyword id="KW-0687">Ribonucleoprotein</keyword>
<keyword id="KW-0689">Ribosomal protein</keyword>
<keyword id="KW-0694">RNA-binding</keyword>
<keyword id="KW-0699">rRNA-binding</keyword>
<gene>
    <name evidence="1" type="primary">rplN</name>
    <name type="ordered locus">SAS2131</name>
</gene>
<sequence length="122" mass="13135">MIQQETRLKVADNSGAREVLTIKVLGGSGRKTANIGDVIVCTVKNATPGGVVKKGDVVKAVIVRTKSGVRRNDGSYIKFDENACVIIRDDKGPRGTRIFGPVARELREGNFMKIVSLAPEVL</sequence>